<sequence length="147" mass="16394">MVNEVIDINEAVRAYIAQIEGLRAEIGRLDATIATLRQSLATLKSLKTLGEGKTVLVPVGSIAQVEMKVEKMDKVVVSVGQNISAELEYEEALKYIEDEIKKLLTFRLVLEQAIAELYAKIEDLIAEAQQTSEEEKAEEEENEEKAE</sequence>
<gene>
    <name type="primary">pfdA2</name>
    <name type="ordered locus">MJ0648</name>
</gene>
<dbReference type="EMBL" id="L77117">
    <property type="protein sequence ID" value="AAB98646.1"/>
    <property type="molecule type" value="Genomic_DNA"/>
</dbReference>
<dbReference type="PIR" id="H64380">
    <property type="entry name" value="H64380"/>
</dbReference>
<dbReference type="RefSeq" id="WP_010870153.1">
    <property type="nucleotide sequence ID" value="NC_000909.1"/>
</dbReference>
<dbReference type="PDB" id="6VY1">
    <property type="method" value="EM"/>
    <property type="resolution" value="6.00 A"/>
    <property type="chains" value="A/B/C/D/E/F/G/a/b/c/d/e/f/g=1-147"/>
</dbReference>
<dbReference type="PDBsum" id="6VY1"/>
<dbReference type="EMDB" id="EMD-21455"/>
<dbReference type="SMR" id="Q58064"/>
<dbReference type="FunCoup" id="Q58064">
    <property type="interactions" value="1"/>
</dbReference>
<dbReference type="STRING" id="243232.MJ_0648"/>
<dbReference type="PaxDb" id="243232-MJ_0648"/>
<dbReference type="EnsemblBacteria" id="AAB98646">
    <property type="protein sequence ID" value="AAB98646"/>
    <property type="gene ID" value="MJ_0648"/>
</dbReference>
<dbReference type="GeneID" id="1451514"/>
<dbReference type="KEGG" id="mja:MJ_0648"/>
<dbReference type="eggNOG" id="arCOG01341">
    <property type="taxonomic scope" value="Archaea"/>
</dbReference>
<dbReference type="HOGENOM" id="CLU_091867_1_3_2"/>
<dbReference type="InParanoid" id="Q58064"/>
<dbReference type="OrthoDB" id="65854at2157"/>
<dbReference type="PhylomeDB" id="Q58064"/>
<dbReference type="Proteomes" id="UP000000805">
    <property type="component" value="Chromosome"/>
</dbReference>
<dbReference type="GO" id="GO:0005737">
    <property type="term" value="C:cytoplasm"/>
    <property type="evidence" value="ECO:0000318"/>
    <property type="project" value="GO_Central"/>
</dbReference>
<dbReference type="GO" id="GO:0016272">
    <property type="term" value="C:prefoldin complex"/>
    <property type="evidence" value="ECO:0000318"/>
    <property type="project" value="GO_Central"/>
</dbReference>
<dbReference type="GO" id="GO:0051082">
    <property type="term" value="F:unfolded protein binding"/>
    <property type="evidence" value="ECO:0007669"/>
    <property type="project" value="UniProtKB-UniRule"/>
</dbReference>
<dbReference type="GO" id="GO:0006457">
    <property type="term" value="P:protein folding"/>
    <property type="evidence" value="ECO:0007669"/>
    <property type="project" value="UniProtKB-UniRule"/>
</dbReference>
<dbReference type="CDD" id="cd23160">
    <property type="entry name" value="Prefoldin_alpha_GimC"/>
    <property type="match status" value="1"/>
</dbReference>
<dbReference type="FunFam" id="1.10.287.370:FF:000027">
    <property type="entry name" value="Prefoldin subunit alpha 1"/>
    <property type="match status" value="1"/>
</dbReference>
<dbReference type="Gene3D" id="1.10.287.370">
    <property type="match status" value="1"/>
</dbReference>
<dbReference type="HAMAP" id="MF_00308">
    <property type="entry name" value="PfdA"/>
    <property type="match status" value="1"/>
</dbReference>
<dbReference type="InterPro" id="IPR011599">
    <property type="entry name" value="PFD_alpha_archaea"/>
</dbReference>
<dbReference type="InterPro" id="IPR009053">
    <property type="entry name" value="Prefoldin"/>
</dbReference>
<dbReference type="InterPro" id="IPR004127">
    <property type="entry name" value="Prefoldin_subunit_alpha"/>
</dbReference>
<dbReference type="NCBIfam" id="TIGR00293">
    <property type="entry name" value="prefoldin subunit alpha"/>
    <property type="match status" value="1"/>
</dbReference>
<dbReference type="PANTHER" id="PTHR12674">
    <property type="entry name" value="PREFOLDIN SUBUNIT 5"/>
    <property type="match status" value="1"/>
</dbReference>
<dbReference type="PANTHER" id="PTHR12674:SF4">
    <property type="entry name" value="PREFOLDIN SUBUNIT ALPHA 2"/>
    <property type="match status" value="1"/>
</dbReference>
<dbReference type="Pfam" id="PF02996">
    <property type="entry name" value="Prefoldin"/>
    <property type="match status" value="1"/>
</dbReference>
<dbReference type="SUPFAM" id="SSF46579">
    <property type="entry name" value="Prefoldin"/>
    <property type="match status" value="1"/>
</dbReference>
<proteinExistence type="evidence at protein level"/>
<evidence type="ECO:0000250" key="1"/>
<evidence type="ECO:0000305" key="2"/>
<protein>
    <recommendedName>
        <fullName>Prefoldin subunit alpha 2</fullName>
    </recommendedName>
    <alternativeName>
        <fullName>GimC subunit alpha 2</fullName>
    </alternativeName>
</protein>
<organism>
    <name type="scientific">Methanocaldococcus jannaschii (strain ATCC 43067 / DSM 2661 / JAL-1 / JCM 10045 / NBRC 100440)</name>
    <name type="common">Methanococcus jannaschii</name>
    <dbReference type="NCBI Taxonomy" id="243232"/>
    <lineage>
        <taxon>Archaea</taxon>
        <taxon>Methanobacteriati</taxon>
        <taxon>Methanobacteriota</taxon>
        <taxon>Methanomada group</taxon>
        <taxon>Methanococci</taxon>
        <taxon>Methanococcales</taxon>
        <taxon>Methanocaldococcaceae</taxon>
        <taxon>Methanocaldococcus</taxon>
    </lineage>
</organism>
<name>PFDA2_METJA</name>
<keyword id="KW-0002">3D-structure</keyword>
<keyword id="KW-0143">Chaperone</keyword>
<keyword id="KW-0963">Cytoplasm</keyword>
<keyword id="KW-1185">Reference proteome</keyword>
<accession>Q58064</accession>
<comment type="function">
    <text evidence="1">Molecular chaperone capable of stabilizing a range of proteins. Seems to fulfill an ATP-independent, HSP70-like function in archaeal de novo protein folding (By similarity).</text>
</comment>
<comment type="subunit">
    <text evidence="1">Heterohexamer of two alpha and four beta subunits.</text>
</comment>
<comment type="subcellular location">
    <subcellularLocation>
        <location evidence="1">Cytoplasm</location>
    </subcellularLocation>
</comment>
<comment type="similarity">
    <text evidence="2">Belongs to the prefoldin subunit alpha family.</text>
</comment>
<feature type="chain" id="PRO_0000153675" description="Prefoldin subunit alpha 2">
    <location>
        <begin position="1"/>
        <end position="147"/>
    </location>
</feature>
<reference key="1">
    <citation type="journal article" date="1996" name="Science">
        <title>Complete genome sequence of the methanogenic archaeon, Methanococcus jannaschii.</title>
        <authorList>
            <person name="Bult C.J."/>
            <person name="White O."/>
            <person name="Olsen G.J."/>
            <person name="Zhou L."/>
            <person name="Fleischmann R.D."/>
            <person name="Sutton G.G."/>
            <person name="Blake J.A."/>
            <person name="FitzGerald L.M."/>
            <person name="Clayton R.A."/>
            <person name="Gocayne J.D."/>
            <person name="Kerlavage A.R."/>
            <person name="Dougherty B.A."/>
            <person name="Tomb J.-F."/>
            <person name="Adams M.D."/>
            <person name="Reich C.I."/>
            <person name="Overbeek R."/>
            <person name="Kirkness E.F."/>
            <person name="Weinstock K.G."/>
            <person name="Merrick J.M."/>
            <person name="Glodek A."/>
            <person name="Scott J.L."/>
            <person name="Geoghagen N.S.M."/>
            <person name="Weidman J.F."/>
            <person name="Fuhrmann J.L."/>
            <person name="Nguyen D."/>
            <person name="Utterback T.R."/>
            <person name="Kelley J.M."/>
            <person name="Peterson J.D."/>
            <person name="Sadow P.W."/>
            <person name="Hanna M.C."/>
            <person name="Cotton M.D."/>
            <person name="Roberts K.M."/>
            <person name="Hurst M.A."/>
            <person name="Kaine B.P."/>
            <person name="Borodovsky M."/>
            <person name="Klenk H.-P."/>
            <person name="Fraser C.M."/>
            <person name="Smith H.O."/>
            <person name="Woese C.R."/>
            <person name="Venter J.C."/>
        </authorList>
    </citation>
    <scope>NUCLEOTIDE SEQUENCE [LARGE SCALE GENOMIC DNA]</scope>
    <source>
        <strain>ATCC 43067 / DSM 2661 / JAL-1 / JCM 10045 / NBRC 100440</strain>
    </source>
</reference>